<organism>
    <name type="scientific">Oryctolagus cuniculus</name>
    <name type="common">Rabbit</name>
    <dbReference type="NCBI Taxonomy" id="9986"/>
    <lineage>
        <taxon>Eukaryota</taxon>
        <taxon>Metazoa</taxon>
        <taxon>Chordata</taxon>
        <taxon>Craniata</taxon>
        <taxon>Vertebrata</taxon>
        <taxon>Euteleostomi</taxon>
        <taxon>Mammalia</taxon>
        <taxon>Eutheria</taxon>
        <taxon>Euarchontoglires</taxon>
        <taxon>Glires</taxon>
        <taxon>Lagomorpha</taxon>
        <taxon>Leporidae</taxon>
        <taxon>Oryctolagus</taxon>
    </lineage>
</organism>
<dbReference type="EC" id="3.6.4.-" evidence="4"/>
<dbReference type="EMBL" id="X60733">
    <property type="protein sequence ID" value="CAA43140.1"/>
    <property type="molecule type" value="mRNA"/>
</dbReference>
<dbReference type="PIR" id="JH0637">
    <property type="entry name" value="ATRBB"/>
</dbReference>
<dbReference type="RefSeq" id="NP_001095153.1">
    <property type="nucleotide sequence ID" value="NM_001101683.1"/>
</dbReference>
<dbReference type="SMR" id="P29751"/>
<dbReference type="BioGRID" id="1172293">
    <property type="interactions" value="4"/>
</dbReference>
<dbReference type="DIP" id="DIP-2197N"/>
<dbReference type="FunCoup" id="P29751">
    <property type="interactions" value="946"/>
</dbReference>
<dbReference type="IntAct" id="P29751">
    <property type="interactions" value="5"/>
</dbReference>
<dbReference type="MINT" id="P29751"/>
<dbReference type="GeneID" id="100009272"/>
<dbReference type="KEGG" id="ocu:100009272"/>
<dbReference type="CTD" id="60"/>
<dbReference type="InParanoid" id="P29751"/>
<dbReference type="OrthoDB" id="9546537at2759"/>
<dbReference type="Proteomes" id="UP000001811">
    <property type="component" value="Unplaced"/>
</dbReference>
<dbReference type="GO" id="GO:0015629">
    <property type="term" value="C:actin cytoskeleton"/>
    <property type="evidence" value="ECO:0000250"/>
    <property type="project" value="UniProtKB"/>
</dbReference>
<dbReference type="GO" id="GO:0005856">
    <property type="term" value="C:cytoskeleton"/>
    <property type="evidence" value="ECO:0000250"/>
    <property type="project" value="AgBase"/>
</dbReference>
<dbReference type="GO" id="GO:0005829">
    <property type="term" value="C:cytosol"/>
    <property type="evidence" value="ECO:0000304"/>
    <property type="project" value="Reactome"/>
</dbReference>
<dbReference type="GO" id="GO:0097433">
    <property type="term" value="C:dense body"/>
    <property type="evidence" value="ECO:0000250"/>
    <property type="project" value="AgBase"/>
</dbReference>
<dbReference type="GO" id="GO:0005925">
    <property type="term" value="C:focal adhesion"/>
    <property type="evidence" value="ECO:0000250"/>
    <property type="project" value="AgBase"/>
</dbReference>
<dbReference type="GO" id="GO:0005634">
    <property type="term" value="C:nucleus"/>
    <property type="evidence" value="ECO:0000250"/>
    <property type="project" value="UniProtKB"/>
</dbReference>
<dbReference type="GO" id="GO:0005886">
    <property type="term" value="C:plasma membrane"/>
    <property type="evidence" value="ECO:0000250"/>
    <property type="project" value="AgBase"/>
</dbReference>
<dbReference type="GO" id="GO:0032991">
    <property type="term" value="C:protein-containing complex"/>
    <property type="evidence" value="ECO:0000250"/>
    <property type="project" value="UniProtKB"/>
</dbReference>
<dbReference type="GO" id="GO:0005524">
    <property type="term" value="F:ATP binding"/>
    <property type="evidence" value="ECO:0007669"/>
    <property type="project" value="UniProtKB-KW"/>
</dbReference>
<dbReference type="GO" id="GO:0016787">
    <property type="term" value="F:hydrolase activity"/>
    <property type="evidence" value="ECO:0007669"/>
    <property type="project" value="UniProtKB-KW"/>
</dbReference>
<dbReference type="CDD" id="cd10224">
    <property type="entry name" value="ASKHA_NBD_actin"/>
    <property type="match status" value="1"/>
</dbReference>
<dbReference type="FunFam" id="3.30.420.40:FF:000131">
    <property type="entry name" value="Actin, alpha skeletal muscle"/>
    <property type="match status" value="1"/>
</dbReference>
<dbReference type="FunFam" id="3.30.420.40:FF:000291">
    <property type="entry name" value="Actin, alpha skeletal muscle"/>
    <property type="match status" value="1"/>
</dbReference>
<dbReference type="FunFam" id="3.90.640.10:FF:000047">
    <property type="entry name" value="Actin, alpha skeletal muscle"/>
    <property type="match status" value="1"/>
</dbReference>
<dbReference type="FunFam" id="3.30.420.40:FF:000058">
    <property type="entry name" value="Putative actin-related protein 5"/>
    <property type="match status" value="1"/>
</dbReference>
<dbReference type="Gene3D" id="3.30.420.40">
    <property type="match status" value="2"/>
</dbReference>
<dbReference type="Gene3D" id="3.90.640.10">
    <property type="entry name" value="Actin, Chain A, domain 4"/>
    <property type="match status" value="1"/>
</dbReference>
<dbReference type="InterPro" id="IPR004000">
    <property type="entry name" value="Actin"/>
</dbReference>
<dbReference type="InterPro" id="IPR020902">
    <property type="entry name" value="Actin/actin-like_CS"/>
</dbReference>
<dbReference type="InterPro" id="IPR004001">
    <property type="entry name" value="Actin_CS"/>
</dbReference>
<dbReference type="InterPro" id="IPR043129">
    <property type="entry name" value="ATPase_NBD"/>
</dbReference>
<dbReference type="PANTHER" id="PTHR11937">
    <property type="entry name" value="ACTIN"/>
    <property type="match status" value="1"/>
</dbReference>
<dbReference type="Pfam" id="PF00022">
    <property type="entry name" value="Actin"/>
    <property type="match status" value="1"/>
</dbReference>
<dbReference type="PRINTS" id="PR00190">
    <property type="entry name" value="ACTIN"/>
</dbReference>
<dbReference type="SMART" id="SM00268">
    <property type="entry name" value="ACTIN"/>
    <property type="match status" value="1"/>
</dbReference>
<dbReference type="SUPFAM" id="SSF53067">
    <property type="entry name" value="Actin-like ATPase domain"/>
    <property type="match status" value="2"/>
</dbReference>
<dbReference type="PROSITE" id="PS00406">
    <property type="entry name" value="ACTINS_1"/>
    <property type="match status" value="1"/>
</dbReference>
<dbReference type="PROSITE" id="PS00432">
    <property type="entry name" value="ACTINS_2"/>
    <property type="match status" value="1"/>
</dbReference>
<dbReference type="PROSITE" id="PS01132">
    <property type="entry name" value="ACTINS_ACT_LIKE"/>
    <property type="match status" value="1"/>
</dbReference>
<accession>P29751</accession>
<reference key="1">
    <citation type="journal article" date="1992" name="Gene">
        <title>Nucleotide sequences of the rabbit alpha-smooth-muscle and beta-non-muscle actin mRNAs.</title>
        <authorList>
            <person name="Harris D.E."/>
            <person name="Warshaw D.M."/>
            <person name="Periasamy M."/>
        </authorList>
    </citation>
    <scope>NUCLEOTIDE SEQUENCE [MRNA]</scope>
    <source>
        <strain>New Zealand white</strain>
        <tissue>Uterus</tissue>
    </source>
</reference>
<proteinExistence type="evidence at transcript level"/>
<evidence type="ECO:0000250" key="1">
    <source>
        <dbReference type="UniProtKB" id="O18840"/>
    </source>
</evidence>
<evidence type="ECO:0000250" key="2">
    <source>
        <dbReference type="UniProtKB" id="P60709"/>
    </source>
</evidence>
<evidence type="ECO:0000250" key="3">
    <source>
        <dbReference type="UniProtKB" id="P60710"/>
    </source>
</evidence>
<evidence type="ECO:0000250" key="4">
    <source>
        <dbReference type="UniProtKB" id="P68137"/>
    </source>
</evidence>
<evidence type="ECO:0000250" key="5">
    <source>
        <dbReference type="UniProtKB" id="Q6QAQ1"/>
    </source>
</evidence>
<evidence type="ECO:0000305" key="6"/>
<comment type="function">
    <text evidence="2 5">Actin is a highly conserved protein that polymerizes to produce filaments that form cross-linked networks in the cytoplasm of cells (By similarity). Actin exists in both monomeric (G-actin) and polymeric (F-actin) forms, both forms playing key functions, such as cell motility and contraction (By similarity). In addition to their role in the cytoplasmic cytoskeleton, G- and F-actin also localize in the nucleus, and regulate gene transcription and motility and repair of damaged DNA (By similarity). Plays a role in the assembly of the gamma-tubulin ring complex (gTuRC), which regulates the minus-end nucleation of alpha-beta tubulin heterodimers that grow into microtubule protafilaments (By similarity). Part of the ACTR1A/ACTB filament around which the dynactin complex is built (By similarity). The dynactin multiprotein complex activates the molecular motor dynein for ultra-processive transport along microtubules (By similarity).</text>
</comment>
<comment type="catalytic activity">
    <reaction evidence="4">
        <text>ATP + H2O = ADP + phosphate + H(+)</text>
        <dbReference type="Rhea" id="RHEA:13065"/>
        <dbReference type="ChEBI" id="CHEBI:15377"/>
        <dbReference type="ChEBI" id="CHEBI:15378"/>
        <dbReference type="ChEBI" id="CHEBI:30616"/>
        <dbReference type="ChEBI" id="CHEBI:43474"/>
        <dbReference type="ChEBI" id="CHEBI:456216"/>
    </reaction>
</comment>
<comment type="subunit">
    <text evidence="1 2 3 5">Polymerization of globular actin (G-actin) leads to a structural filament (F-actin) in the form of a two-stranded helix (By similarity). Each actin can bind to 4 others (By similarity). Identified in a IGF2BP1-dependent mRNP granule complex containing untranslated mRNAs (By similarity). Component of the BAF complex, which includes at least actin (ACTB), ARID1A, ARID1B/BAF250, SMARCA2, SMARCA4/BRG1, ACTL6A/BAF53, ACTL6B/BAF53B, SMARCE1/BAF57 SMARCC1/BAF155, SMARCC2/BAF170, SMARCB1/SNF5/INI1, and one or more of SMARCD1/BAF60A, SMARCD2/BAF60B, or SMARCD3/BAF60C (By similarity). In muscle cells, the BAF complex also contains DPF3 (By similarity). Found in a complex with XPO6, Ran, ACTB and PFN1 (By similarity). Interacts with PFN1 (By similarity). Interacts with XPO6 and EMD (By similarity). Interacts with ERBB2 (By similarity). Interacts with GCSAM (By similarity). Interacts with TBC1D21 (By similarity). Interacts with CPNE1 (via VWFA domain) and CPNE4 (via VWFA domain) (By similarity). Interacts with DHX9 (via C-terminus); this interaction is direct and mediates the attachment to nuclear ribonucleoprotein complexes (By similarity). Interacts with FAM107A (By similarity). Associates with the gamma-tubulin ring complex (gTuRC) consisting of TUBGCP2, TUBGCP3, TUBGCP4, TUBGCP5 and TUBGCP6 and gamma-tubulin TUBG1 or TUBG2; within the complex, interacts with TUBGCP3 and TUBGCP6 to form a luminal bridge with MZT1 that stabilizes the initial structure during complex assembly (By similarity). Part of the ACTR1A/ACTB filament around which the dynactin complex is built (By similarity). The filament contains 8 copies of ACTR1A and 1 ACTB (By similarity). Interacts with TPRN which forms ring-like structures in the stereocilium taper region; the interaction may stabilize stereocilia in inner ear hair cells (By similarity). Interacts with AMOTL2 (via N-terminus), the interaction facilitates binding of cell junction complexes to actin fibers in endothelial cells (By similarity).</text>
</comment>
<comment type="subcellular location">
    <subcellularLocation>
        <location evidence="2">Cytoplasm</location>
        <location evidence="2">Cytoskeleton</location>
    </subcellularLocation>
    <subcellularLocation>
        <location evidence="2">Nucleus</location>
    </subcellularLocation>
    <text evidence="2">Localized in cytoplasmic mRNP granules containing untranslated mRNAs.</text>
</comment>
<comment type="PTM">
    <molecule>Actin, cytoplasmic 1</molecule>
    <text evidence="2">N-terminal cleavage of acetylated methionine of immature cytoplasmic actin by ACTMAP.</text>
</comment>
<comment type="PTM">
    <text evidence="2">ISGylated.</text>
</comment>
<comment type="PTM">
    <text evidence="3">Oxidation of Met-44 and Met-47 by MICALs (MICAL1, MICAL2 or MICAL3) to form methionine sulfoxide promotes actin filament depolymerization. MICAL1 and MICAL2 produce the (R)-S-oxide form. The (R)-S-oxide form is reverted by MSRB1 and MSRB2, which promote actin repolymerization.</text>
</comment>
<comment type="PTM">
    <text evidence="2">Monomethylation at Lys-84 (K84me1) regulates actin-myosin interaction and actomyosin-dependent processes. Demethylation by ALKBH4 is required for maintaining actomyosin dynamics supporting normal cleavage furrow ingression during cytokinesis and cell migration.</text>
</comment>
<comment type="PTM">
    <molecule>Actin, cytoplasmic 1, N-terminally processed</molecule>
    <text evidence="2">N-terminal acetylation by NAA80 affects actin filament depolymerization and elongation, including elongation driven by formins. In contrast, filament nucleation by the Arp2/3 complex is not affected.</text>
</comment>
<comment type="PTM">
    <text evidence="2 3">Methylated at His-73 by SETD3 (By similarity). Methylation at His-73 is required for smooth muscle contraction of the laboring uterus during delivery (By similarity).</text>
</comment>
<comment type="miscellaneous">
    <text evidence="2">In vertebrates 3 main groups of actin isoforms, alpha, beta and gamma have been identified. The alpha actins are found in muscle tissues and are a major constituent of the contractile apparatus. The beta and gamma actins coexist in most cell types as components of the cytoskeleton and as mediators of internal cell motility.</text>
</comment>
<comment type="similarity">
    <text evidence="6">Belongs to the actin family.</text>
</comment>
<name>ACTB_RABIT</name>
<protein>
    <recommendedName>
        <fullName>Actin, cytoplasmic 1</fullName>
    </recommendedName>
    <alternativeName>
        <fullName>Beta-actin</fullName>
        <ecNumber evidence="4">3.6.4.-</ecNumber>
    </alternativeName>
    <component>
        <recommendedName>
            <fullName>Actin, cytoplasmic 1, N-terminally processed</fullName>
        </recommendedName>
    </component>
</protein>
<sequence>MDDDIAALVVDNGSGMCKAGFAGDDAPRAVFPSIVGRPRHQGVMVGMGQKDSYVGDEAQSKRGILTLKYPIEHGIVTNWDDMEKIWHHTFYNELRVAPEERPVLLTEAPLNPKANREKMTQIMFETFNTPAMYVAIQAVLSLYASGRTTGIVMDSGDGVTHTVPIYEGYALPHAILRLDLAGRDLTDYLMKILTERGYSFTTTAEREIVRDIKEKLCYVALDFEQEMATAASSSSLEKSYELPDGQVITIGNERFRCPEALFQPSFLGMESCGIHETTFNSIMKCDVDIRKDLYANTVLSGGTTMYPGIADRMQKEITALAPSTMKIKIIAPPERKYSVWIGGSILASLSTFQQMWISKQEYDESGPSIVHRKCF</sequence>
<keyword id="KW-0007">Acetylation</keyword>
<keyword id="KW-0067">ATP-binding</keyword>
<keyword id="KW-0963">Cytoplasm</keyword>
<keyword id="KW-0206">Cytoskeleton</keyword>
<keyword id="KW-0378">Hydrolase</keyword>
<keyword id="KW-0488">Methylation</keyword>
<keyword id="KW-0547">Nucleotide-binding</keyword>
<keyword id="KW-0539">Nucleus</keyword>
<keyword id="KW-0558">Oxidation</keyword>
<keyword id="KW-1185">Reference proteome</keyword>
<keyword id="KW-0832">Ubl conjugation</keyword>
<feature type="chain" id="PRO_0000000779" description="Actin, cytoplasmic 1">
    <location>
        <begin position="1"/>
        <end position="375"/>
    </location>
</feature>
<feature type="initiator methionine" description="Removed; alternate" evidence="2">
    <location>
        <position position="1"/>
    </location>
</feature>
<feature type="chain" id="PRO_0000367080" description="Actin, cytoplasmic 1, N-terminally processed">
    <location>
        <begin position="2"/>
        <end position="375"/>
    </location>
</feature>
<feature type="modified residue" description="N-acetylmethionine" evidence="2">
    <location>
        <position position="1"/>
    </location>
</feature>
<feature type="modified residue" description="N-acetylaspartate; in Actin, cytoplasmic 1, N-terminally processed" evidence="2">
    <location>
        <position position="2"/>
    </location>
</feature>
<feature type="modified residue" description="Methionine (R)-sulfoxide" evidence="3">
    <location>
        <position position="44"/>
    </location>
</feature>
<feature type="modified residue" description="Methionine (R)-sulfoxide" evidence="3">
    <location>
        <position position="47"/>
    </location>
</feature>
<feature type="modified residue" description="Tele-methylhistidine" evidence="3">
    <location>
        <position position="73"/>
    </location>
</feature>
<feature type="modified residue" description="N6-methyllysine" evidence="2">
    <location>
        <position position="84"/>
    </location>
</feature>
<gene>
    <name type="primary">ACTB</name>
</gene>